<sequence>MPSVVSPQDRLQDDAPAAQLRRAEPCLWLNPHRQPIPAARQAVAGDHISLDDTKEAAARFARFAPLLEGVFPELQATGGVIESPLLPASSLHAAAGLVAGQGALWIKADHRLPVAGSIKARGGIHEVLELAERLALQHGLLTPQSDADDYRALANPAARAVFARYTVAVGSTGNLGLSIGVAASALGFHAVVHMSADAKEWKKQRLRQRGVQVVEHAGDYEGAVAAGRAQAAQDPFSHFVDDERSLSLLLGYSAAALHLRQQLQDAGIAVDAQHPLFVYLPCGVGGAPAGITFGLRQVLGAHVHCFFAEPVQSPCFMVQMMAGQGAHPSVYDWGLTNRTEADGLAVPRASLPAAELMEPLLSGCFTVCDDTLFRQLVQVLDATGERIEPSAAAGLSGPGFLTGTETGRTWLHAQGLWPHLAQATHLVWTTGGLYVPPEAYARFEERGRALG</sequence>
<proteinExistence type="inferred from homology"/>
<keyword id="KW-0456">Lyase</keyword>
<keyword id="KW-0663">Pyridoxal phosphate</keyword>
<keyword id="KW-1185">Reference proteome</keyword>
<comment type="catalytic activity">
    <reaction evidence="1">
        <text>D-serine = pyruvate + NH4(+)</text>
        <dbReference type="Rhea" id="RHEA:13977"/>
        <dbReference type="ChEBI" id="CHEBI:15361"/>
        <dbReference type="ChEBI" id="CHEBI:28938"/>
        <dbReference type="ChEBI" id="CHEBI:35247"/>
        <dbReference type="EC" id="4.3.1.18"/>
    </reaction>
</comment>
<comment type="cofactor">
    <cofactor evidence="1">
        <name>pyridoxal 5'-phosphate</name>
        <dbReference type="ChEBI" id="CHEBI:597326"/>
    </cofactor>
</comment>
<comment type="similarity">
    <text evidence="1">Belongs to the serine/threonine dehydratase family. DsdA subfamily.</text>
</comment>
<dbReference type="EC" id="4.3.1.18" evidence="1"/>
<dbReference type="EMBL" id="CP001392">
    <property type="protein sequence ID" value="ACM33083.1"/>
    <property type="molecule type" value="Genomic_DNA"/>
</dbReference>
<dbReference type="RefSeq" id="WP_015913178.1">
    <property type="nucleotide sequence ID" value="NC_011992.1"/>
</dbReference>
<dbReference type="SMR" id="B9MIR7"/>
<dbReference type="KEGG" id="dia:Dtpsy_1624"/>
<dbReference type="eggNOG" id="COG3048">
    <property type="taxonomic scope" value="Bacteria"/>
</dbReference>
<dbReference type="HOGENOM" id="CLU_035707_0_0_4"/>
<dbReference type="Proteomes" id="UP000000450">
    <property type="component" value="Chromosome"/>
</dbReference>
<dbReference type="GO" id="GO:0008721">
    <property type="term" value="F:D-serine ammonia-lyase activity"/>
    <property type="evidence" value="ECO:0007669"/>
    <property type="project" value="UniProtKB-EC"/>
</dbReference>
<dbReference type="GO" id="GO:0016836">
    <property type="term" value="F:hydro-lyase activity"/>
    <property type="evidence" value="ECO:0007669"/>
    <property type="project" value="UniProtKB-UniRule"/>
</dbReference>
<dbReference type="GO" id="GO:0030170">
    <property type="term" value="F:pyridoxal phosphate binding"/>
    <property type="evidence" value="ECO:0007669"/>
    <property type="project" value="InterPro"/>
</dbReference>
<dbReference type="GO" id="GO:0036088">
    <property type="term" value="P:D-serine catabolic process"/>
    <property type="evidence" value="ECO:0007669"/>
    <property type="project" value="TreeGrafter"/>
</dbReference>
<dbReference type="GO" id="GO:0009097">
    <property type="term" value="P:isoleucine biosynthetic process"/>
    <property type="evidence" value="ECO:0007669"/>
    <property type="project" value="TreeGrafter"/>
</dbReference>
<dbReference type="Gene3D" id="3.40.50.1100">
    <property type="match status" value="2"/>
</dbReference>
<dbReference type="HAMAP" id="MF_01030">
    <property type="entry name" value="D_Ser_dehydrat"/>
    <property type="match status" value="1"/>
</dbReference>
<dbReference type="InterPro" id="IPR011780">
    <property type="entry name" value="D_Ser_am_lyase"/>
</dbReference>
<dbReference type="InterPro" id="IPR050147">
    <property type="entry name" value="Ser/Thr_Dehydratase"/>
</dbReference>
<dbReference type="InterPro" id="IPR001926">
    <property type="entry name" value="TrpB-like_PALP"/>
</dbReference>
<dbReference type="InterPro" id="IPR036052">
    <property type="entry name" value="TrpB-like_PALP_sf"/>
</dbReference>
<dbReference type="NCBIfam" id="TIGR02035">
    <property type="entry name" value="D_Ser_am_lyase"/>
    <property type="match status" value="1"/>
</dbReference>
<dbReference type="NCBIfam" id="NF002823">
    <property type="entry name" value="PRK02991.1"/>
    <property type="match status" value="1"/>
</dbReference>
<dbReference type="PANTHER" id="PTHR48078:SF9">
    <property type="entry name" value="D-SERINE DEHYDRATASE"/>
    <property type="match status" value="1"/>
</dbReference>
<dbReference type="PANTHER" id="PTHR48078">
    <property type="entry name" value="THREONINE DEHYDRATASE, MITOCHONDRIAL-RELATED"/>
    <property type="match status" value="1"/>
</dbReference>
<dbReference type="Pfam" id="PF00291">
    <property type="entry name" value="PALP"/>
    <property type="match status" value="1"/>
</dbReference>
<dbReference type="SUPFAM" id="SSF53686">
    <property type="entry name" value="Tryptophan synthase beta subunit-like PLP-dependent enzymes"/>
    <property type="match status" value="1"/>
</dbReference>
<gene>
    <name evidence="1" type="primary">dsdA</name>
    <name type="ordered locus">Dtpsy_1624</name>
</gene>
<reference key="1">
    <citation type="submission" date="2009-01" db="EMBL/GenBank/DDBJ databases">
        <title>Complete sequence of Diaphorobacter sp. TPSY.</title>
        <authorList>
            <consortium name="US DOE Joint Genome Institute"/>
            <person name="Lucas S."/>
            <person name="Copeland A."/>
            <person name="Lapidus A."/>
            <person name="Glavina del Rio T."/>
            <person name="Tice H."/>
            <person name="Bruce D."/>
            <person name="Goodwin L."/>
            <person name="Pitluck S."/>
            <person name="Chertkov O."/>
            <person name="Brettin T."/>
            <person name="Detter J.C."/>
            <person name="Han C."/>
            <person name="Larimer F."/>
            <person name="Land M."/>
            <person name="Hauser L."/>
            <person name="Kyrpides N."/>
            <person name="Mikhailova N."/>
            <person name="Coates J.D."/>
        </authorList>
    </citation>
    <scope>NUCLEOTIDE SEQUENCE [LARGE SCALE GENOMIC DNA]</scope>
    <source>
        <strain>TPSY</strain>
    </source>
</reference>
<feature type="chain" id="PRO_1000149386" description="Probable D-serine dehydratase">
    <location>
        <begin position="1"/>
        <end position="451"/>
    </location>
</feature>
<feature type="modified residue" description="N6-(pyridoxal phosphate)lysine" evidence="1">
    <location>
        <position position="119"/>
    </location>
</feature>
<evidence type="ECO:0000255" key="1">
    <source>
        <dbReference type="HAMAP-Rule" id="MF_01030"/>
    </source>
</evidence>
<name>SDHD_ACIET</name>
<accession>B9MIR7</accession>
<organism>
    <name type="scientific">Acidovorax ebreus (strain TPSY)</name>
    <name type="common">Diaphorobacter sp. (strain TPSY)</name>
    <dbReference type="NCBI Taxonomy" id="535289"/>
    <lineage>
        <taxon>Bacteria</taxon>
        <taxon>Pseudomonadati</taxon>
        <taxon>Pseudomonadota</taxon>
        <taxon>Betaproteobacteria</taxon>
        <taxon>Burkholderiales</taxon>
        <taxon>Comamonadaceae</taxon>
        <taxon>Diaphorobacter</taxon>
    </lineage>
</organism>
<protein>
    <recommendedName>
        <fullName evidence="1">Probable D-serine dehydratase</fullName>
        <ecNumber evidence="1">4.3.1.18</ecNumber>
    </recommendedName>
    <alternativeName>
        <fullName evidence="1">D-serine deaminase</fullName>
        <shortName evidence="1">DSD</shortName>
    </alternativeName>
</protein>